<feature type="chain" id="PRO_1000057340" description="Leucine--tRNA ligase">
    <location>
        <begin position="1"/>
        <end position="802"/>
    </location>
</feature>
<feature type="short sequence motif" description="'HIGH' region">
    <location>
        <begin position="41"/>
        <end position="52"/>
    </location>
</feature>
<feature type="short sequence motif" description="'KMSKS' region">
    <location>
        <begin position="580"/>
        <end position="584"/>
    </location>
</feature>
<feature type="binding site" evidence="1">
    <location>
        <position position="583"/>
    </location>
    <ligand>
        <name>ATP</name>
        <dbReference type="ChEBI" id="CHEBI:30616"/>
    </ligand>
</feature>
<gene>
    <name evidence="1" type="primary">leuS</name>
    <name type="ordered locus">Clos_2587</name>
</gene>
<keyword id="KW-0030">Aminoacyl-tRNA synthetase</keyword>
<keyword id="KW-0067">ATP-binding</keyword>
<keyword id="KW-0963">Cytoplasm</keyword>
<keyword id="KW-0436">Ligase</keyword>
<keyword id="KW-0547">Nucleotide-binding</keyword>
<keyword id="KW-0648">Protein biosynthesis</keyword>
<keyword id="KW-1185">Reference proteome</keyword>
<reference key="1">
    <citation type="submission" date="2007-10" db="EMBL/GenBank/DDBJ databases">
        <title>Complete genome of Alkaliphilus oremlandii OhILAs.</title>
        <authorList>
            <person name="Copeland A."/>
            <person name="Lucas S."/>
            <person name="Lapidus A."/>
            <person name="Barry K."/>
            <person name="Detter J.C."/>
            <person name="Glavina del Rio T."/>
            <person name="Hammon N."/>
            <person name="Israni S."/>
            <person name="Dalin E."/>
            <person name="Tice H."/>
            <person name="Pitluck S."/>
            <person name="Chain P."/>
            <person name="Malfatti S."/>
            <person name="Shin M."/>
            <person name="Vergez L."/>
            <person name="Schmutz J."/>
            <person name="Larimer F."/>
            <person name="Land M."/>
            <person name="Hauser L."/>
            <person name="Kyrpides N."/>
            <person name="Mikhailova N."/>
            <person name="Stolz J.F."/>
            <person name="Dawson A."/>
            <person name="Fisher E."/>
            <person name="Crable B."/>
            <person name="Perera E."/>
            <person name="Lisak J."/>
            <person name="Ranganathan M."/>
            <person name="Basu P."/>
            <person name="Richardson P."/>
        </authorList>
    </citation>
    <scope>NUCLEOTIDE SEQUENCE [LARGE SCALE GENOMIC DNA]</scope>
    <source>
        <strain>OhILAs</strain>
    </source>
</reference>
<organism>
    <name type="scientific">Alkaliphilus oremlandii (strain OhILAs)</name>
    <name type="common">Clostridium oremlandii (strain OhILAs)</name>
    <dbReference type="NCBI Taxonomy" id="350688"/>
    <lineage>
        <taxon>Bacteria</taxon>
        <taxon>Bacillati</taxon>
        <taxon>Bacillota</taxon>
        <taxon>Clostridia</taxon>
        <taxon>Peptostreptococcales</taxon>
        <taxon>Natronincolaceae</taxon>
        <taxon>Alkaliphilus</taxon>
    </lineage>
</organism>
<comment type="catalytic activity">
    <reaction evidence="1">
        <text>tRNA(Leu) + L-leucine + ATP = L-leucyl-tRNA(Leu) + AMP + diphosphate</text>
        <dbReference type="Rhea" id="RHEA:11688"/>
        <dbReference type="Rhea" id="RHEA-COMP:9613"/>
        <dbReference type="Rhea" id="RHEA-COMP:9622"/>
        <dbReference type="ChEBI" id="CHEBI:30616"/>
        <dbReference type="ChEBI" id="CHEBI:33019"/>
        <dbReference type="ChEBI" id="CHEBI:57427"/>
        <dbReference type="ChEBI" id="CHEBI:78442"/>
        <dbReference type="ChEBI" id="CHEBI:78494"/>
        <dbReference type="ChEBI" id="CHEBI:456215"/>
        <dbReference type="EC" id="6.1.1.4"/>
    </reaction>
</comment>
<comment type="subcellular location">
    <subcellularLocation>
        <location evidence="1">Cytoplasm</location>
    </subcellularLocation>
</comment>
<comment type="similarity">
    <text evidence="1">Belongs to the class-I aminoacyl-tRNA synthetase family.</text>
</comment>
<dbReference type="EC" id="6.1.1.4" evidence="1"/>
<dbReference type="EMBL" id="CP000853">
    <property type="protein sequence ID" value="ABW20118.1"/>
    <property type="molecule type" value="Genomic_DNA"/>
</dbReference>
<dbReference type="RefSeq" id="WP_012160425.1">
    <property type="nucleotide sequence ID" value="NC_009922.1"/>
</dbReference>
<dbReference type="SMR" id="A8MJY6"/>
<dbReference type="STRING" id="350688.Clos_2587"/>
<dbReference type="KEGG" id="aoe:Clos_2587"/>
<dbReference type="eggNOG" id="COG0495">
    <property type="taxonomic scope" value="Bacteria"/>
</dbReference>
<dbReference type="HOGENOM" id="CLU_004427_0_0_9"/>
<dbReference type="Proteomes" id="UP000000269">
    <property type="component" value="Chromosome"/>
</dbReference>
<dbReference type="GO" id="GO:0005829">
    <property type="term" value="C:cytosol"/>
    <property type="evidence" value="ECO:0007669"/>
    <property type="project" value="TreeGrafter"/>
</dbReference>
<dbReference type="GO" id="GO:0002161">
    <property type="term" value="F:aminoacyl-tRNA deacylase activity"/>
    <property type="evidence" value="ECO:0007669"/>
    <property type="project" value="InterPro"/>
</dbReference>
<dbReference type="GO" id="GO:0005524">
    <property type="term" value="F:ATP binding"/>
    <property type="evidence" value="ECO:0007669"/>
    <property type="project" value="UniProtKB-UniRule"/>
</dbReference>
<dbReference type="GO" id="GO:0004823">
    <property type="term" value="F:leucine-tRNA ligase activity"/>
    <property type="evidence" value="ECO:0007669"/>
    <property type="project" value="UniProtKB-UniRule"/>
</dbReference>
<dbReference type="GO" id="GO:0006429">
    <property type="term" value="P:leucyl-tRNA aminoacylation"/>
    <property type="evidence" value="ECO:0007669"/>
    <property type="project" value="UniProtKB-UniRule"/>
</dbReference>
<dbReference type="CDD" id="cd07958">
    <property type="entry name" value="Anticodon_Ia_Leu_BEm"/>
    <property type="match status" value="1"/>
</dbReference>
<dbReference type="CDD" id="cd00812">
    <property type="entry name" value="LeuRS_core"/>
    <property type="match status" value="1"/>
</dbReference>
<dbReference type="FunFam" id="1.10.730.10:FF:000002">
    <property type="entry name" value="Leucine--tRNA ligase"/>
    <property type="match status" value="1"/>
</dbReference>
<dbReference type="FunFam" id="3.40.50.620:FF:000056">
    <property type="entry name" value="Leucine--tRNA ligase"/>
    <property type="match status" value="1"/>
</dbReference>
<dbReference type="FunFam" id="3.40.50.620:FF:000077">
    <property type="entry name" value="Leucine--tRNA ligase"/>
    <property type="match status" value="1"/>
</dbReference>
<dbReference type="Gene3D" id="3.10.20.590">
    <property type="match status" value="1"/>
</dbReference>
<dbReference type="Gene3D" id="3.40.50.620">
    <property type="entry name" value="HUPs"/>
    <property type="match status" value="2"/>
</dbReference>
<dbReference type="Gene3D" id="1.10.730.10">
    <property type="entry name" value="Isoleucyl-tRNA Synthetase, Domain 1"/>
    <property type="match status" value="1"/>
</dbReference>
<dbReference type="HAMAP" id="MF_00049_B">
    <property type="entry name" value="Leu_tRNA_synth_B"/>
    <property type="match status" value="1"/>
</dbReference>
<dbReference type="InterPro" id="IPR001412">
    <property type="entry name" value="aa-tRNA-synth_I_CS"/>
</dbReference>
<dbReference type="InterPro" id="IPR002300">
    <property type="entry name" value="aa-tRNA-synth_Ia"/>
</dbReference>
<dbReference type="InterPro" id="IPR002302">
    <property type="entry name" value="Leu-tRNA-ligase"/>
</dbReference>
<dbReference type="InterPro" id="IPR025709">
    <property type="entry name" value="Leu_tRNA-synth_edit"/>
</dbReference>
<dbReference type="InterPro" id="IPR013155">
    <property type="entry name" value="M/V/L/I-tRNA-synth_anticd-bd"/>
</dbReference>
<dbReference type="InterPro" id="IPR015413">
    <property type="entry name" value="Methionyl/Leucyl_tRNA_Synth"/>
</dbReference>
<dbReference type="InterPro" id="IPR014729">
    <property type="entry name" value="Rossmann-like_a/b/a_fold"/>
</dbReference>
<dbReference type="InterPro" id="IPR009080">
    <property type="entry name" value="tRNAsynth_Ia_anticodon-bd"/>
</dbReference>
<dbReference type="InterPro" id="IPR009008">
    <property type="entry name" value="Val/Leu/Ile-tRNA-synth_edit"/>
</dbReference>
<dbReference type="NCBIfam" id="TIGR00396">
    <property type="entry name" value="leuS_bact"/>
    <property type="match status" value="1"/>
</dbReference>
<dbReference type="PANTHER" id="PTHR43740:SF2">
    <property type="entry name" value="LEUCINE--TRNA LIGASE, MITOCHONDRIAL"/>
    <property type="match status" value="1"/>
</dbReference>
<dbReference type="PANTHER" id="PTHR43740">
    <property type="entry name" value="LEUCYL-TRNA SYNTHETASE"/>
    <property type="match status" value="1"/>
</dbReference>
<dbReference type="Pfam" id="PF08264">
    <property type="entry name" value="Anticodon_1"/>
    <property type="match status" value="1"/>
</dbReference>
<dbReference type="Pfam" id="PF00133">
    <property type="entry name" value="tRNA-synt_1"/>
    <property type="match status" value="1"/>
</dbReference>
<dbReference type="Pfam" id="PF13603">
    <property type="entry name" value="tRNA-synt_1_2"/>
    <property type="match status" value="1"/>
</dbReference>
<dbReference type="Pfam" id="PF09334">
    <property type="entry name" value="tRNA-synt_1g"/>
    <property type="match status" value="1"/>
</dbReference>
<dbReference type="PRINTS" id="PR00985">
    <property type="entry name" value="TRNASYNTHLEU"/>
</dbReference>
<dbReference type="SUPFAM" id="SSF47323">
    <property type="entry name" value="Anticodon-binding domain of a subclass of class I aminoacyl-tRNA synthetases"/>
    <property type="match status" value="1"/>
</dbReference>
<dbReference type="SUPFAM" id="SSF52374">
    <property type="entry name" value="Nucleotidylyl transferase"/>
    <property type="match status" value="1"/>
</dbReference>
<dbReference type="SUPFAM" id="SSF50677">
    <property type="entry name" value="ValRS/IleRS/LeuRS editing domain"/>
    <property type="match status" value="1"/>
</dbReference>
<dbReference type="PROSITE" id="PS00178">
    <property type="entry name" value="AA_TRNA_LIGASE_I"/>
    <property type="match status" value="1"/>
</dbReference>
<proteinExistence type="inferred from homology"/>
<name>SYL_ALKOO</name>
<accession>A8MJY6</accession>
<sequence length="802" mass="92499">MKQYNPKEIESKWQNIWEERGVFHASNDKDKEKFYALIEFPYPSGQGLHVGHPRPYTALDVVSRKRRLEGYNVLYPMGWDAFGLPTENYAIKNKIHPKVVTEQNVARFKKQLQGLGMSFDWSREINTTDPEYYKWTQWIFLKLFEKGLAYKKEMSINWCTSCKVGLANEEVVNGGCERCGAEVVRKQKNQWMLKITEYAERLINDLDLVDYIERVKIQQKNWIGKSEGMEVDFEITGGKKITVYTTRPDTLFGSTYMVISPEHPYIEELAAHIQNMDDLVHYREEAAKKSEFERTELVKDKTGVKIEGIEATNPATGKQIPIFISDYVMMSYGTGAIMAVPGHDTRDWEFAKKFNLPIVEVVSGGNVDEAAYTDTEEGIIVNSDFINGMQVKEAKEKISSWLEEKGLGKRKVNYKLRDWVFSRQRYWGEPIPLVHCDCCGWVPVPESQLPVLLPEVESYEPTDNGESPLANLRDWVETTCPKCGGKAERETDTMPQWAGSSWYFLRYTDPHNNEELASKENLDYWMPIDWYNGGMEHTTLHLLYSRFWHKFLYDCGVVPSCEPYQKRTSHGMILGENNEKMSKSRGNVINPDDIVTEFGADTLRLYEMFIGDFEKSVPWSQNGVKGCRRFLDRIWKLQEILVDSQEMTKELEGNIHKTIKKVTEDYETLKFNTAVASMMALINDFYDHGTVTKGDMKTLLTLLNPVAPHITEELWEVLGFEGHIYGTTWPIWDEAKTIDSVVEIPIQINGKVKGQMVISVDFTADQVKEQFRNDERLMALVEGKSIVKEIYVPGKIYNIVVK</sequence>
<protein>
    <recommendedName>
        <fullName evidence="1">Leucine--tRNA ligase</fullName>
        <ecNumber evidence="1">6.1.1.4</ecNumber>
    </recommendedName>
    <alternativeName>
        <fullName evidence="1">Leucyl-tRNA synthetase</fullName>
        <shortName evidence="1">LeuRS</shortName>
    </alternativeName>
</protein>
<evidence type="ECO:0000255" key="1">
    <source>
        <dbReference type="HAMAP-Rule" id="MF_00049"/>
    </source>
</evidence>